<name>SOX13_HUMAN</name>
<sequence length="622" mass="69228">MSMRSPISAQLALDGVGTMVNCTIKSEEKKEPCHEAPQGSATAAEPQPGDPARASQDSADPQAPAQGNFRGSWDCSSPEGNGSPEPKRPGVSEAASGSQEKLDFNRNLKEVVPAIEKLLSSDWKERFLGRNSMEAKDVKGTQESLAEKELQLLVMIHQLSTLRDQLLTAHSEQKNMAAMLFEKQQQQMELARQQQEQIAKQQQQLIQQQHKINLLQQQIQQVNMPYVMIPAFPPSHQPLPVTPDSQLALPIQPIPCKPVEYPLQLLHSPPAPVVKRPGAMATHHPLQEPSQPLNLTAKPKAPELPNTSSSPSLKMSSCVPRPPSHGGPTRDLQSSPPSLPLGFLGEGDAVTKAIQDARQLLHSHSGALDGSPNTPFRKDLISLDSSPAKERLEDGCVHPLEEAMLSCDMDGSRHFPESRNSSHIKRPMNAFMVWAKDERRKILQAFPDMHNSSISKILGSRWKSMTNQEKQPYYEEQARLSRQHLEKYPDYKYKPRPKRTCIVEGKRLRVGEYKALMRTRRQDARQSYVIPPQAGQVQMSSSDVLYPRAAGMPLAQPLVEHYVPRSLDPNMPVIVNTCSLREEGEGTDDRHSVADGEMYRYSEDEDSEGEEKSDGELVVLTD</sequence>
<accession>Q9UN79</accession>
<accession>B4E2B0</accession>
<accession>O95275</accession>
<accession>O95826</accession>
<accession>Q3KQV7</accession>
<accession>Q5SXX1</accession>
<accession>Q9UHW7</accession>
<keyword id="KW-0963">Cytoplasm</keyword>
<keyword id="KW-0221">Differentiation</keyword>
<keyword id="KW-0238">DNA-binding</keyword>
<keyword id="KW-0539">Nucleus</keyword>
<keyword id="KW-0597">Phosphoprotein</keyword>
<keyword id="KW-1267">Proteomics identification</keyword>
<keyword id="KW-1185">Reference proteome</keyword>
<keyword id="KW-0678">Repressor</keyword>
<keyword id="KW-0804">Transcription</keyword>
<keyword id="KW-0805">Transcription regulation</keyword>
<organism>
    <name type="scientific">Homo sapiens</name>
    <name type="common">Human</name>
    <dbReference type="NCBI Taxonomy" id="9606"/>
    <lineage>
        <taxon>Eukaryota</taxon>
        <taxon>Metazoa</taxon>
        <taxon>Chordata</taxon>
        <taxon>Craniata</taxon>
        <taxon>Vertebrata</taxon>
        <taxon>Euteleostomi</taxon>
        <taxon>Mammalia</taxon>
        <taxon>Eutheria</taxon>
        <taxon>Euarchontoglires</taxon>
        <taxon>Primates</taxon>
        <taxon>Haplorrhini</taxon>
        <taxon>Catarrhini</taxon>
        <taxon>Hominidae</taxon>
        <taxon>Homo</taxon>
    </lineage>
</organism>
<protein>
    <recommendedName>
        <fullName>Transcription factor SOX-13</fullName>
    </recommendedName>
    <alternativeName>
        <fullName>Islet cell antigen 12</fullName>
    </alternativeName>
    <alternativeName>
        <fullName>SRY (Sex determining region Y)-box 13</fullName>
    </alternativeName>
    <alternativeName>
        <fullName>Type 1 diabetes autoantigen ICA12</fullName>
    </alternativeName>
</protein>
<reference key="1">
    <citation type="journal article" date="1998" name="Nucleic Acids Res.">
        <title>High expression of the HMG box factor sox-13 in arterial walls during embryonic development.</title>
        <authorList>
            <person name="Roose J."/>
            <person name="Korver W."/>
            <person name="Oving E."/>
            <person name="Wilson A."/>
            <person name="Wagenaar G."/>
            <person name="Markman M."/>
            <person name="Lamers W."/>
            <person name="Clevers H."/>
        </authorList>
    </citation>
    <scope>NUCLEOTIDE SEQUENCE [MRNA]</scope>
    <source>
        <tissue>Kidney</tissue>
    </source>
</reference>
<reference key="2">
    <citation type="submission" date="1998-10" db="EMBL/GenBank/DDBJ databases">
        <title>ICA12: a novel autoantigen in type I diabetes.</title>
        <authorList>
            <person name="LaGasse J.M."/>
            <person name="Gleason S."/>
            <person name="Rabin D.U."/>
            <person name="Michaels D."/>
            <person name="Kletter G."/>
            <person name="Pihoker K."/>
            <person name="Mahoney P."/>
            <person name="Valle T."/>
            <person name="Nguyen C."/>
            <person name="Hagopian W.A."/>
        </authorList>
    </citation>
    <scope>NUCLEOTIDE SEQUENCE [MRNA]</scope>
    <source>
        <tissue>Pancreatic islet</tissue>
    </source>
</reference>
<reference key="3">
    <citation type="submission" date="1998-12" db="EMBL/GenBank/DDBJ databases">
        <title>SOX13 encodes an autoimmune antigen in type 1 diabetes.</title>
        <authorList>
            <person name="Kasimiotis H."/>
            <person name="Myers M.A."/>
            <person name="Mertin S."/>
            <person name="Argentaro A."/>
            <person name="Fida S."/>
            <person name="Ferro T."/>
            <person name="Olsson J.E."/>
            <person name="Rowley M.J."/>
            <person name="Harley V.R."/>
        </authorList>
    </citation>
    <scope>NUCLEOTIDE SEQUENCE [MRNA]</scope>
    <source>
        <tissue>Pancreas</tissue>
        <tissue>Placenta</tissue>
    </source>
</reference>
<reference key="4">
    <citation type="submission" date="1999-05" db="EMBL/GenBank/DDBJ databases">
        <title>Genomic structure and precise chromosomal localization of human SOX13.</title>
        <authorList>
            <person name="Argentaro A."/>
            <person name="Olsson J."/>
            <person name="Critcher R."/>
            <person name="McDowall S.G."/>
            <person name="Harley V.R."/>
        </authorList>
    </citation>
    <scope>NUCLEOTIDE SEQUENCE [GENOMIC DNA]</scope>
</reference>
<reference key="5">
    <citation type="journal article" date="2004" name="Nat. Genet.">
        <title>Complete sequencing and characterization of 21,243 full-length human cDNAs.</title>
        <authorList>
            <person name="Ota T."/>
            <person name="Suzuki Y."/>
            <person name="Nishikawa T."/>
            <person name="Otsuki T."/>
            <person name="Sugiyama T."/>
            <person name="Irie R."/>
            <person name="Wakamatsu A."/>
            <person name="Hayashi K."/>
            <person name="Sato H."/>
            <person name="Nagai K."/>
            <person name="Kimura K."/>
            <person name="Makita H."/>
            <person name="Sekine M."/>
            <person name="Obayashi M."/>
            <person name="Nishi T."/>
            <person name="Shibahara T."/>
            <person name="Tanaka T."/>
            <person name="Ishii S."/>
            <person name="Yamamoto J."/>
            <person name="Saito K."/>
            <person name="Kawai Y."/>
            <person name="Isono Y."/>
            <person name="Nakamura Y."/>
            <person name="Nagahari K."/>
            <person name="Murakami K."/>
            <person name="Yasuda T."/>
            <person name="Iwayanagi T."/>
            <person name="Wagatsuma M."/>
            <person name="Shiratori A."/>
            <person name="Sudo H."/>
            <person name="Hosoiri T."/>
            <person name="Kaku Y."/>
            <person name="Kodaira H."/>
            <person name="Kondo H."/>
            <person name="Sugawara M."/>
            <person name="Takahashi M."/>
            <person name="Kanda K."/>
            <person name="Yokoi T."/>
            <person name="Furuya T."/>
            <person name="Kikkawa E."/>
            <person name="Omura Y."/>
            <person name="Abe K."/>
            <person name="Kamihara K."/>
            <person name="Katsuta N."/>
            <person name="Sato K."/>
            <person name="Tanikawa M."/>
            <person name="Yamazaki M."/>
            <person name="Ninomiya K."/>
            <person name="Ishibashi T."/>
            <person name="Yamashita H."/>
            <person name="Murakawa K."/>
            <person name="Fujimori K."/>
            <person name="Tanai H."/>
            <person name="Kimata M."/>
            <person name="Watanabe M."/>
            <person name="Hiraoka S."/>
            <person name="Chiba Y."/>
            <person name="Ishida S."/>
            <person name="Ono Y."/>
            <person name="Takiguchi S."/>
            <person name="Watanabe S."/>
            <person name="Yosida M."/>
            <person name="Hotuta T."/>
            <person name="Kusano J."/>
            <person name="Kanehori K."/>
            <person name="Takahashi-Fujii A."/>
            <person name="Hara H."/>
            <person name="Tanase T.-O."/>
            <person name="Nomura Y."/>
            <person name="Togiya S."/>
            <person name="Komai F."/>
            <person name="Hara R."/>
            <person name="Takeuchi K."/>
            <person name="Arita M."/>
            <person name="Imose N."/>
            <person name="Musashino K."/>
            <person name="Yuuki H."/>
            <person name="Oshima A."/>
            <person name="Sasaki N."/>
            <person name="Aotsuka S."/>
            <person name="Yoshikawa Y."/>
            <person name="Matsunawa H."/>
            <person name="Ichihara T."/>
            <person name="Shiohata N."/>
            <person name="Sano S."/>
            <person name="Moriya S."/>
            <person name="Momiyama H."/>
            <person name="Satoh N."/>
            <person name="Takami S."/>
            <person name="Terashima Y."/>
            <person name="Suzuki O."/>
            <person name="Nakagawa S."/>
            <person name="Senoh A."/>
            <person name="Mizoguchi H."/>
            <person name="Goto Y."/>
            <person name="Shimizu F."/>
            <person name="Wakebe H."/>
            <person name="Hishigaki H."/>
            <person name="Watanabe T."/>
            <person name="Sugiyama A."/>
            <person name="Takemoto M."/>
            <person name="Kawakami B."/>
            <person name="Yamazaki M."/>
            <person name="Watanabe K."/>
            <person name="Kumagai A."/>
            <person name="Itakura S."/>
            <person name="Fukuzumi Y."/>
            <person name="Fujimori Y."/>
            <person name="Komiyama M."/>
            <person name="Tashiro H."/>
            <person name="Tanigami A."/>
            <person name="Fujiwara T."/>
            <person name="Ono T."/>
            <person name="Yamada K."/>
            <person name="Fujii Y."/>
            <person name="Ozaki K."/>
            <person name="Hirao M."/>
            <person name="Ohmori Y."/>
            <person name="Kawabata A."/>
            <person name="Hikiji T."/>
            <person name="Kobatake N."/>
            <person name="Inagaki H."/>
            <person name="Ikema Y."/>
            <person name="Okamoto S."/>
            <person name="Okitani R."/>
            <person name="Kawakami T."/>
            <person name="Noguchi S."/>
            <person name="Itoh T."/>
            <person name="Shigeta K."/>
            <person name="Senba T."/>
            <person name="Matsumura K."/>
            <person name="Nakajima Y."/>
            <person name="Mizuno T."/>
            <person name="Morinaga M."/>
            <person name="Sasaki M."/>
            <person name="Togashi T."/>
            <person name="Oyama M."/>
            <person name="Hata H."/>
            <person name="Watanabe M."/>
            <person name="Komatsu T."/>
            <person name="Mizushima-Sugano J."/>
            <person name="Satoh T."/>
            <person name="Shirai Y."/>
            <person name="Takahashi Y."/>
            <person name="Nakagawa K."/>
            <person name="Okumura K."/>
            <person name="Nagase T."/>
            <person name="Nomura N."/>
            <person name="Kikuchi H."/>
            <person name="Masuho Y."/>
            <person name="Yamashita R."/>
            <person name="Nakai K."/>
            <person name="Yada T."/>
            <person name="Nakamura Y."/>
            <person name="Ohara O."/>
            <person name="Isogai T."/>
            <person name="Sugano S."/>
        </authorList>
    </citation>
    <scope>NUCLEOTIDE SEQUENCE [LARGE SCALE MRNA]</scope>
    <source>
        <tissue>Trachea</tissue>
    </source>
</reference>
<reference key="6">
    <citation type="journal article" date="2006" name="Nature">
        <title>The DNA sequence and biological annotation of human chromosome 1.</title>
        <authorList>
            <person name="Gregory S.G."/>
            <person name="Barlow K.F."/>
            <person name="McLay K.E."/>
            <person name="Kaul R."/>
            <person name="Swarbreck D."/>
            <person name="Dunham A."/>
            <person name="Scott C.E."/>
            <person name="Howe K.L."/>
            <person name="Woodfine K."/>
            <person name="Spencer C.C.A."/>
            <person name="Jones M.C."/>
            <person name="Gillson C."/>
            <person name="Searle S."/>
            <person name="Zhou Y."/>
            <person name="Kokocinski F."/>
            <person name="McDonald L."/>
            <person name="Evans R."/>
            <person name="Phillips K."/>
            <person name="Atkinson A."/>
            <person name="Cooper R."/>
            <person name="Jones C."/>
            <person name="Hall R.E."/>
            <person name="Andrews T.D."/>
            <person name="Lloyd C."/>
            <person name="Ainscough R."/>
            <person name="Almeida J.P."/>
            <person name="Ambrose K.D."/>
            <person name="Anderson F."/>
            <person name="Andrew R.W."/>
            <person name="Ashwell R.I.S."/>
            <person name="Aubin K."/>
            <person name="Babbage A.K."/>
            <person name="Bagguley C.L."/>
            <person name="Bailey J."/>
            <person name="Beasley H."/>
            <person name="Bethel G."/>
            <person name="Bird C.P."/>
            <person name="Bray-Allen S."/>
            <person name="Brown J.Y."/>
            <person name="Brown A.J."/>
            <person name="Buckley D."/>
            <person name="Burton J."/>
            <person name="Bye J."/>
            <person name="Carder C."/>
            <person name="Chapman J.C."/>
            <person name="Clark S.Y."/>
            <person name="Clarke G."/>
            <person name="Clee C."/>
            <person name="Cobley V."/>
            <person name="Collier R.E."/>
            <person name="Corby N."/>
            <person name="Coville G.J."/>
            <person name="Davies J."/>
            <person name="Deadman R."/>
            <person name="Dunn M."/>
            <person name="Earthrowl M."/>
            <person name="Ellington A.G."/>
            <person name="Errington H."/>
            <person name="Frankish A."/>
            <person name="Frankland J."/>
            <person name="French L."/>
            <person name="Garner P."/>
            <person name="Garnett J."/>
            <person name="Gay L."/>
            <person name="Ghori M.R.J."/>
            <person name="Gibson R."/>
            <person name="Gilby L.M."/>
            <person name="Gillett W."/>
            <person name="Glithero R.J."/>
            <person name="Grafham D.V."/>
            <person name="Griffiths C."/>
            <person name="Griffiths-Jones S."/>
            <person name="Grocock R."/>
            <person name="Hammond S."/>
            <person name="Harrison E.S.I."/>
            <person name="Hart E."/>
            <person name="Haugen E."/>
            <person name="Heath P.D."/>
            <person name="Holmes S."/>
            <person name="Holt K."/>
            <person name="Howden P.J."/>
            <person name="Hunt A.R."/>
            <person name="Hunt S.E."/>
            <person name="Hunter G."/>
            <person name="Isherwood J."/>
            <person name="James R."/>
            <person name="Johnson C."/>
            <person name="Johnson D."/>
            <person name="Joy A."/>
            <person name="Kay M."/>
            <person name="Kershaw J.K."/>
            <person name="Kibukawa M."/>
            <person name="Kimberley A.M."/>
            <person name="King A."/>
            <person name="Knights A.J."/>
            <person name="Lad H."/>
            <person name="Laird G."/>
            <person name="Lawlor S."/>
            <person name="Leongamornlert D.A."/>
            <person name="Lloyd D.M."/>
            <person name="Loveland J."/>
            <person name="Lovell J."/>
            <person name="Lush M.J."/>
            <person name="Lyne R."/>
            <person name="Martin S."/>
            <person name="Mashreghi-Mohammadi M."/>
            <person name="Matthews L."/>
            <person name="Matthews N.S.W."/>
            <person name="McLaren S."/>
            <person name="Milne S."/>
            <person name="Mistry S."/>
            <person name="Moore M.J.F."/>
            <person name="Nickerson T."/>
            <person name="O'Dell C.N."/>
            <person name="Oliver K."/>
            <person name="Palmeiri A."/>
            <person name="Palmer S.A."/>
            <person name="Parker A."/>
            <person name="Patel D."/>
            <person name="Pearce A.V."/>
            <person name="Peck A.I."/>
            <person name="Pelan S."/>
            <person name="Phelps K."/>
            <person name="Phillimore B.J."/>
            <person name="Plumb R."/>
            <person name="Rajan J."/>
            <person name="Raymond C."/>
            <person name="Rouse G."/>
            <person name="Saenphimmachak C."/>
            <person name="Sehra H.K."/>
            <person name="Sheridan E."/>
            <person name="Shownkeen R."/>
            <person name="Sims S."/>
            <person name="Skuce C.D."/>
            <person name="Smith M."/>
            <person name="Steward C."/>
            <person name="Subramanian S."/>
            <person name="Sycamore N."/>
            <person name="Tracey A."/>
            <person name="Tromans A."/>
            <person name="Van Helmond Z."/>
            <person name="Wall M."/>
            <person name="Wallis J.M."/>
            <person name="White S."/>
            <person name="Whitehead S.L."/>
            <person name="Wilkinson J.E."/>
            <person name="Willey D.L."/>
            <person name="Williams H."/>
            <person name="Wilming L."/>
            <person name="Wray P.W."/>
            <person name="Wu Z."/>
            <person name="Coulson A."/>
            <person name="Vaudin M."/>
            <person name="Sulston J.E."/>
            <person name="Durbin R.M."/>
            <person name="Hubbard T."/>
            <person name="Wooster R."/>
            <person name="Dunham I."/>
            <person name="Carter N.P."/>
            <person name="McVean G."/>
            <person name="Ross M.T."/>
            <person name="Harrow J."/>
            <person name="Olson M.V."/>
            <person name="Beck S."/>
            <person name="Rogers J."/>
            <person name="Bentley D.R."/>
        </authorList>
    </citation>
    <scope>NUCLEOTIDE SEQUENCE [LARGE SCALE GENOMIC DNA]</scope>
</reference>
<reference key="7">
    <citation type="submission" date="2005-07" db="EMBL/GenBank/DDBJ databases">
        <authorList>
            <person name="Mural R.J."/>
            <person name="Istrail S."/>
            <person name="Sutton G.G."/>
            <person name="Florea L."/>
            <person name="Halpern A.L."/>
            <person name="Mobarry C.M."/>
            <person name="Lippert R."/>
            <person name="Walenz B."/>
            <person name="Shatkay H."/>
            <person name="Dew I."/>
            <person name="Miller J.R."/>
            <person name="Flanigan M.J."/>
            <person name="Edwards N.J."/>
            <person name="Bolanos R."/>
            <person name="Fasulo D."/>
            <person name="Halldorsson B.V."/>
            <person name="Hannenhalli S."/>
            <person name="Turner R."/>
            <person name="Yooseph S."/>
            <person name="Lu F."/>
            <person name="Nusskern D.R."/>
            <person name="Shue B.C."/>
            <person name="Zheng X.H."/>
            <person name="Zhong F."/>
            <person name="Delcher A.L."/>
            <person name="Huson D.H."/>
            <person name="Kravitz S.A."/>
            <person name="Mouchard L."/>
            <person name="Reinert K."/>
            <person name="Remington K.A."/>
            <person name="Clark A.G."/>
            <person name="Waterman M.S."/>
            <person name="Eichler E.E."/>
            <person name="Adams M.D."/>
            <person name="Hunkapiller M.W."/>
            <person name="Myers E.W."/>
            <person name="Venter J.C."/>
        </authorList>
    </citation>
    <scope>NUCLEOTIDE SEQUENCE [LARGE SCALE GENOMIC DNA]</scope>
</reference>
<reference key="8">
    <citation type="journal article" date="2004" name="Genome Res.">
        <title>The status, quality, and expansion of the NIH full-length cDNA project: the Mammalian Gene Collection (MGC).</title>
        <authorList>
            <consortium name="The MGC Project Team"/>
        </authorList>
    </citation>
    <scope>NUCLEOTIDE SEQUENCE [LARGE SCALE MRNA]</scope>
    <source>
        <tissue>Uterus</tissue>
    </source>
</reference>
<reference key="9">
    <citation type="journal article" date="2000" name="Diabetes">
        <title>Sex-determining region Y-related protein SOX13 is a diabetes autoantigen expressed in pancreatic islets.</title>
        <authorList>
            <person name="Kasimiotis H."/>
            <person name="Myers M.A."/>
            <person name="Argentaro A."/>
            <person name="Mertin S."/>
            <person name="Fida S."/>
            <person name="Ferraro T."/>
            <person name="Olsson J."/>
            <person name="Rowley M.J."/>
            <person name="Harley V.R."/>
        </authorList>
    </citation>
    <scope>FUNCTION</scope>
    <scope>SUBUNIT</scope>
    <scope>SUBCELLULAR LOCATION</scope>
    <scope>TISSUE SPECIFICITY</scope>
    <scope>INVOLVEMENT IN TYPE 1 DIABETES</scope>
</reference>
<reference key="10">
    <citation type="journal article" date="2007" name="Science">
        <title>Regulation of gammadelta versus alphabeta T lymphocyte differentiation by the transcription factor SOX13.</title>
        <authorList>
            <person name="Melichar H.J."/>
            <person name="Narayan K."/>
            <person name="Der S.D."/>
            <person name="Hiraoka Y."/>
            <person name="Gardiol N."/>
            <person name="Jeannet G."/>
            <person name="Held W."/>
            <person name="Chambers C.A."/>
            <person name="Kang J."/>
        </authorList>
    </citation>
    <scope>INTERACTION WITH TCF7</scope>
</reference>
<reference key="11">
    <citation type="journal article" date="2008" name="Proc. Natl. Acad. Sci. U.S.A.">
        <title>A quantitative atlas of mitotic phosphorylation.</title>
        <authorList>
            <person name="Dephoure N."/>
            <person name="Zhou C."/>
            <person name="Villen J."/>
            <person name="Beausoleil S.A."/>
            <person name="Bakalarski C.E."/>
            <person name="Elledge S.J."/>
            <person name="Gygi S.P."/>
        </authorList>
    </citation>
    <scope>PHOSPHORYLATION [LARGE SCALE ANALYSIS] AT SER-335 AND SER-382</scope>
    <scope>IDENTIFICATION BY MASS SPECTROMETRY [LARGE SCALE ANALYSIS]</scope>
    <source>
        <tissue>Cervix carcinoma</tissue>
    </source>
</reference>
<reference key="12">
    <citation type="journal article" date="2009" name="Anal. Chem.">
        <title>Lys-N and trypsin cover complementary parts of the phosphoproteome in a refined SCX-based approach.</title>
        <authorList>
            <person name="Gauci S."/>
            <person name="Helbig A.O."/>
            <person name="Slijper M."/>
            <person name="Krijgsveld J."/>
            <person name="Heck A.J."/>
            <person name="Mohammed S."/>
        </authorList>
    </citation>
    <scope>IDENTIFICATION BY MASS SPECTROMETRY [LARGE SCALE ANALYSIS]</scope>
</reference>
<reference key="13">
    <citation type="journal article" date="2010" name="J. Biol. Chem.">
        <title>Interaction between Hhex and SOX13 modulates Wnt/TCF activity.</title>
        <authorList>
            <person name="Marfil V."/>
            <person name="Moya M."/>
            <person name="Pierreux C.E."/>
            <person name="Castell J.V."/>
            <person name="Lemaigre F.P."/>
            <person name="Real F.X."/>
            <person name="Bort R."/>
        </authorList>
    </citation>
    <scope>FUNCTION</scope>
    <scope>INTERACTION WITH HHEX AND TCF7</scope>
    <scope>TISSUE SPECIFICITY</scope>
</reference>
<reference key="14">
    <citation type="journal article" date="2010" name="Sci. Signal.">
        <title>Quantitative phosphoproteomics reveals widespread full phosphorylation site occupancy during mitosis.</title>
        <authorList>
            <person name="Olsen J.V."/>
            <person name="Vermeulen M."/>
            <person name="Santamaria A."/>
            <person name="Kumar C."/>
            <person name="Miller M.L."/>
            <person name="Jensen L.J."/>
            <person name="Gnad F."/>
            <person name="Cox J."/>
            <person name="Jensen T.S."/>
            <person name="Nigg E.A."/>
            <person name="Brunak S."/>
            <person name="Mann M."/>
        </authorList>
    </citation>
    <scope>PHOSPHORYLATION [LARGE SCALE ANALYSIS] AT SER-386</scope>
    <scope>IDENTIFICATION BY MASS SPECTROMETRY [LARGE SCALE ANALYSIS]</scope>
    <source>
        <tissue>Cervix carcinoma</tissue>
    </source>
</reference>
<reference key="15">
    <citation type="journal article" date="2011" name="Sci. Signal.">
        <title>System-wide temporal characterization of the proteome and phosphoproteome of human embryonic stem cell differentiation.</title>
        <authorList>
            <person name="Rigbolt K.T."/>
            <person name="Prokhorova T.A."/>
            <person name="Akimov V."/>
            <person name="Henningsen J."/>
            <person name="Johansen P.T."/>
            <person name="Kratchmarova I."/>
            <person name="Kassem M."/>
            <person name="Mann M."/>
            <person name="Olsen J.V."/>
            <person name="Blagoev B."/>
        </authorList>
    </citation>
    <scope>PHOSPHORYLATION [LARGE SCALE ANALYSIS] AT SER-386 AND SER-613</scope>
    <scope>IDENTIFICATION BY MASS SPECTROMETRY [LARGE SCALE ANALYSIS]</scope>
</reference>
<reference key="16">
    <citation type="journal article" date="2013" name="J. Proteome Res.">
        <title>Toward a comprehensive characterization of a human cancer cell phosphoproteome.</title>
        <authorList>
            <person name="Zhou H."/>
            <person name="Di Palma S."/>
            <person name="Preisinger C."/>
            <person name="Peng M."/>
            <person name="Polat A.N."/>
            <person name="Heck A.J."/>
            <person name="Mohammed S."/>
        </authorList>
    </citation>
    <scope>PHOSPHORYLATION [LARGE SCALE ANALYSIS] AT SER-385 AND SER-386</scope>
    <scope>IDENTIFICATION BY MASS SPECTROMETRY [LARGE SCALE ANALYSIS]</scope>
    <source>
        <tissue>Cervix carcinoma</tissue>
    </source>
</reference>
<feature type="chain" id="PRO_0000048756" description="Transcription factor SOX-13">
    <location>
        <begin position="1"/>
        <end position="622"/>
    </location>
</feature>
<feature type="DNA-binding region" description="HMG box" evidence="2">
    <location>
        <begin position="424"/>
        <end position="492"/>
    </location>
</feature>
<feature type="region of interest" description="Disordered" evidence="3">
    <location>
        <begin position="27"/>
        <end position="102"/>
    </location>
</feature>
<feature type="region of interest" description="Required for homodimerization" evidence="4">
    <location>
        <begin position="84"/>
        <end position="344"/>
    </location>
</feature>
<feature type="region of interest" description="Disordered" evidence="3">
    <location>
        <begin position="274"/>
        <end position="344"/>
    </location>
</feature>
<feature type="region of interest" description="Disordered" evidence="3">
    <location>
        <begin position="581"/>
        <end position="622"/>
    </location>
</feature>
<feature type="compositionally biased region" description="Polar residues" evidence="3">
    <location>
        <begin position="305"/>
        <end position="315"/>
    </location>
</feature>
<feature type="compositionally biased region" description="Basic and acidic residues" evidence="3">
    <location>
        <begin position="581"/>
        <end position="602"/>
    </location>
</feature>
<feature type="modified residue" description="Phosphoserine" evidence="8">
    <location>
        <position position="335"/>
    </location>
</feature>
<feature type="modified residue" description="Phosphoserine" evidence="8">
    <location>
        <position position="382"/>
    </location>
</feature>
<feature type="modified residue" description="Phosphoserine" evidence="11">
    <location>
        <position position="385"/>
    </location>
</feature>
<feature type="modified residue" description="Phosphoserine" evidence="9 10 11">
    <location>
        <position position="386"/>
    </location>
</feature>
<feature type="modified residue" description="Phosphoserine" evidence="10">
    <location>
        <position position="613"/>
    </location>
</feature>
<feature type="sequence variant" id="VAR_062671" description="In dbSNP:rs34758764.">
    <original>P</original>
    <variation>S</variation>
    <location>
        <position position="532"/>
    </location>
</feature>
<feature type="sequence conflict" description="In Ref. 2; AAD16237." evidence="7" ref="2">
    <original>V</original>
    <variation>A</variation>
    <location>
        <position position="91"/>
    </location>
</feature>
<feature type="sequence conflict" description="In Ref. 4; AAD50120." evidence="7" ref="4">
    <original>V</original>
    <variation>G</variation>
    <location>
        <position position="259"/>
    </location>
</feature>
<feature type="sequence conflict" description="In Ref. 4; AAD50120." evidence="7" ref="4">
    <original>P</original>
    <variation>L</variation>
    <location>
        <position position="270"/>
    </location>
</feature>
<feature type="sequence conflict" description="In Ref. 4; AAD50120." evidence="7" ref="4">
    <original>Y</original>
    <variation>C</variation>
    <location>
        <position position="491"/>
    </location>
</feature>
<feature type="sequence conflict" description="In Ref. 4; AAD50120." evidence="7" ref="4">
    <original>A</original>
    <variation>G</variation>
    <location>
        <position position="515"/>
    </location>
</feature>
<proteinExistence type="evidence at protein level"/>
<dbReference type="EMBL" id="AF083105">
    <property type="protein sequence ID" value="AAC83687.1"/>
    <property type="status" value="ALT_SEQ"/>
    <property type="molecule type" value="mRNA"/>
</dbReference>
<dbReference type="EMBL" id="AF098915">
    <property type="protein sequence ID" value="AAD16237.1"/>
    <property type="molecule type" value="mRNA"/>
</dbReference>
<dbReference type="EMBL" id="AF116571">
    <property type="protein sequence ID" value="AAF23875.1"/>
    <property type="status" value="ALT_INIT"/>
    <property type="molecule type" value="mRNA"/>
</dbReference>
<dbReference type="EMBL" id="AK304192">
    <property type="protein sequence ID" value="BAG65072.1"/>
    <property type="status" value="ALT_INIT"/>
    <property type="molecule type" value="mRNA"/>
</dbReference>
<dbReference type="EMBL" id="AF149301">
    <property type="protein sequence ID" value="AAD50120.1"/>
    <property type="molecule type" value="Genomic_DNA"/>
</dbReference>
<dbReference type="EMBL" id="AL592146">
    <property type="status" value="NOT_ANNOTATED_CDS"/>
    <property type="molecule type" value="Genomic_DNA"/>
</dbReference>
<dbReference type="EMBL" id="CH471067">
    <property type="protein sequence ID" value="EAW91500.1"/>
    <property type="molecule type" value="Genomic_DNA"/>
</dbReference>
<dbReference type="EMBL" id="BC106038">
    <property type="protein sequence ID" value="AAI06039.1"/>
    <property type="molecule type" value="mRNA"/>
</dbReference>
<dbReference type="CCDS" id="CCDS44299.1"/>
<dbReference type="RefSeq" id="NP_005677.2">
    <property type="nucleotide sequence ID" value="NM_005686.2"/>
</dbReference>
<dbReference type="RefSeq" id="XP_047290962.1">
    <property type="nucleotide sequence ID" value="XM_047435006.1"/>
</dbReference>
<dbReference type="RefSeq" id="XP_054195691.1">
    <property type="nucleotide sequence ID" value="XM_054339716.1"/>
</dbReference>
<dbReference type="SMR" id="Q9UN79"/>
<dbReference type="BioGRID" id="114948">
    <property type="interactions" value="35"/>
</dbReference>
<dbReference type="FunCoup" id="Q9UN79">
    <property type="interactions" value="3205"/>
</dbReference>
<dbReference type="IntAct" id="Q9UN79">
    <property type="interactions" value="25"/>
</dbReference>
<dbReference type="MINT" id="Q9UN79"/>
<dbReference type="STRING" id="9606.ENSP00000356172"/>
<dbReference type="GlyGen" id="Q9UN79">
    <property type="glycosylation" value="2 sites, 1 O-linked glycan (2 sites)"/>
</dbReference>
<dbReference type="iPTMnet" id="Q9UN79"/>
<dbReference type="PhosphoSitePlus" id="Q9UN79"/>
<dbReference type="BioMuta" id="SOX13"/>
<dbReference type="DMDM" id="288558840"/>
<dbReference type="jPOST" id="Q9UN79"/>
<dbReference type="MassIVE" id="Q9UN79"/>
<dbReference type="PaxDb" id="9606-ENSP00000356172"/>
<dbReference type="PeptideAtlas" id="Q9UN79"/>
<dbReference type="ProteomicsDB" id="85269"/>
<dbReference type="Antibodypedia" id="11334">
    <property type="antibodies" value="186 antibodies from 31 providers"/>
</dbReference>
<dbReference type="DNASU" id="9580"/>
<dbReference type="Ensembl" id="ENST00000367204.6">
    <property type="protein sequence ID" value="ENSP00000356172.1"/>
    <property type="gene ID" value="ENSG00000143842.15"/>
</dbReference>
<dbReference type="Ensembl" id="ENST00000618875.4">
    <property type="protein sequence ID" value="ENSP00000478239.1"/>
    <property type="gene ID" value="ENSG00000143842.15"/>
</dbReference>
<dbReference type="GeneID" id="9580"/>
<dbReference type="KEGG" id="hsa:9580"/>
<dbReference type="MANE-Select" id="ENST00000367204.6">
    <property type="protein sequence ID" value="ENSP00000356172.1"/>
    <property type="RefSeq nucleotide sequence ID" value="NM_005686.3"/>
    <property type="RefSeq protein sequence ID" value="NP_005677.2"/>
</dbReference>
<dbReference type="UCSC" id="uc001ham.4">
    <property type="organism name" value="human"/>
</dbReference>
<dbReference type="AGR" id="HGNC:11192"/>
<dbReference type="CTD" id="9580"/>
<dbReference type="DisGeNET" id="9580"/>
<dbReference type="GeneCards" id="SOX13"/>
<dbReference type="HGNC" id="HGNC:11192">
    <property type="gene designation" value="SOX13"/>
</dbReference>
<dbReference type="HPA" id="ENSG00000143842">
    <property type="expression patterns" value="Low tissue specificity"/>
</dbReference>
<dbReference type="MIM" id="604748">
    <property type="type" value="gene"/>
</dbReference>
<dbReference type="neXtProt" id="NX_Q9UN79"/>
<dbReference type="OpenTargets" id="ENSG00000143842"/>
<dbReference type="PharmGKB" id="PA36029"/>
<dbReference type="VEuPathDB" id="HostDB:ENSG00000143842"/>
<dbReference type="eggNOG" id="KOG0528">
    <property type="taxonomic scope" value="Eukaryota"/>
</dbReference>
<dbReference type="GeneTree" id="ENSGT00940000158759"/>
<dbReference type="HOGENOM" id="CLU_018522_1_1_1"/>
<dbReference type="InParanoid" id="Q9UN79"/>
<dbReference type="OMA" id="KEPCYED"/>
<dbReference type="OrthoDB" id="6247875at2759"/>
<dbReference type="PAN-GO" id="Q9UN79">
    <property type="GO annotations" value="5 GO annotations based on evolutionary models"/>
</dbReference>
<dbReference type="PhylomeDB" id="Q9UN79"/>
<dbReference type="TreeFam" id="TF320471"/>
<dbReference type="PathwayCommons" id="Q9UN79"/>
<dbReference type="Reactome" id="R-HSA-3769402">
    <property type="pathway name" value="Deactivation of the beta-catenin transactivating complex"/>
</dbReference>
<dbReference type="SignaLink" id="Q9UN79"/>
<dbReference type="SIGNOR" id="Q9UN79"/>
<dbReference type="BioGRID-ORCS" id="9580">
    <property type="hits" value="16 hits in 1174 CRISPR screens"/>
</dbReference>
<dbReference type="ChiTaRS" id="SOX13">
    <property type="organism name" value="human"/>
</dbReference>
<dbReference type="GeneWiki" id="SOX13"/>
<dbReference type="GenomeRNAi" id="9580"/>
<dbReference type="Pharos" id="Q9UN79">
    <property type="development level" value="Tbio"/>
</dbReference>
<dbReference type="PRO" id="PR:Q9UN79"/>
<dbReference type="Proteomes" id="UP000005640">
    <property type="component" value="Chromosome 1"/>
</dbReference>
<dbReference type="RNAct" id="Q9UN79">
    <property type="molecule type" value="protein"/>
</dbReference>
<dbReference type="Bgee" id="ENSG00000143842">
    <property type="expression patterns" value="Expressed in sural nerve and 183 other cell types or tissues"/>
</dbReference>
<dbReference type="ExpressionAtlas" id="Q9UN79">
    <property type="expression patterns" value="baseline and differential"/>
</dbReference>
<dbReference type="GO" id="GO:0000785">
    <property type="term" value="C:chromatin"/>
    <property type="evidence" value="ECO:0000247"/>
    <property type="project" value="NTNU_SB"/>
</dbReference>
<dbReference type="GO" id="GO:0005737">
    <property type="term" value="C:cytoplasm"/>
    <property type="evidence" value="ECO:0000314"/>
    <property type="project" value="UniProtKB"/>
</dbReference>
<dbReference type="GO" id="GO:0005654">
    <property type="term" value="C:nucleoplasm"/>
    <property type="evidence" value="ECO:0000314"/>
    <property type="project" value="HPA"/>
</dbReference>
<dbReference type="GO" id="GO:0005634">
    <property type="term" value="C:nucleus"/>
    <property type="evidence" value="ECO:0000250"/>
    <property type="project" value="UniProtKB"/>
</dbReference>
<dbReference type="GO" id="GO:0003677">
    <property type="term" value="F:DNA binding"/>
    <property type="evidence" value="ECO:0000314"/>
    <property type="project" value="UniProtKB"/>
</dbReference>
<dbReference type="GO" id="GO:0003700">
    <property type="term" value="F:DNA-binding transcription factor activity"/>
    <property type="evidence" value="ECO:0000304"/>
    <property type="project" value="ProtInc"/>
</dbReference>
<dbReference type="GO" id="GO:0000981">
    <property type="term" value="F:DNA-binding transcription factor activity, RNA polymerase II-specific"/>
    <property type="evidence" value="ECO:0000247"/>
    <property type="project" value="NTNU_SB"/>
</dbReference>
<dbReference type="GO" id="GO:0001217">
    <property type="term" value="F:DNA-binding transcription repressor activity"/>
    <property type="evidence" value="ECO:0000250"/>
    <property type="project" value="UniProtKB"/>
</dbReference>
<dbReference type="GO" id="GO:0001227">
    <property type="term" value="F:DNA-binding transcription repressor activity, RNA polymerase II-specific"/>
    <property type="evidence" value="ECO:0000315"/>
    <property type="project" value="GO_Central"/>
</dbReference>
<dbReference type="GO" id="GO:0042802">
    <property type="term" value="F:identical protein binding"/>
    <property type="evidence" value="ECO:0000353"/>
    <property type="project" value="UniProtKB"/>
</dbReference>
<dbReference type="GO" id="GO:0000978">
    <property type="term" value="F:RNA polymerase II cis-regulatory region sequence-specific DNA binding"/>
    <property type="evidence" value="ECO:0000318"/>
    <property type="project" value="GO_Central"/>
</dbReference>
<dbReference type="GO" id="GO:0043565">
    <property type="term" value="F:sequence-specific DNA binding"/>
    <property type="evidence" value="ECO:0000250"/>
    <property type="project" value="UniProtKB"/>
</dbReference>
<dbReference type="GO" id="GO:0000976">
    <property type="term" value="F:transcription cis-regulatory region binding"/>
    <property type="evidence" value="ECO:0000314"/>
    <property type="project" value="UniProtKB"/>
</dbReference>
<dbReference type="GO" id="GO:0009653">
    <property type="term" value="P:anatomical structure morphogenesis"/>
    <property type="evidence" value="ECO:0000304"/>
    <property type="project" value="ProtInc"/>
</dbReference>
<dbReference type="GO" id="GO:0045165">
    <property type="term" value="P:cell fate commitment"/>
    <property type="evidence" value="ECO:0000318"/>
    <property type="project" value="GO_Central"/>
</dbReference>
<dbReference type="GO" id="GO:0042492">
    <property type="term" value="P:gamma-delta T cell differentiation"/>
    <property type="evidence" value="ECO:0000250"/>
    <property type="project" value="UniProtKB"/>
</dbReference>
<dbReference type="GO" id="GO:0090090">
    <property type="term" value="P:negative regulation of canonical Wnt signaling pathway"/>
    <property type="evidence" value="ECO:0000315"/>
    <property type="project" value="UniProtKB"/>
</dbReference>
<dbReference type="GO" id="GO:0045892">
    <property type="term" value="P:negative regulation of DNA-templated transcription"/>
    <property type="evidence" value="ECO:0000315"/>
    <property type="project" value="UniProtKB"/>
</dbReference>
<dbReference type="GO" id="GO:0000122">
    <property type="term" value="P:negative regulation of transcription by RNA polymerase II"/>
    <property type="evidence" value="ECO:0000315"/>
    <property type="project" value="UniProtKB"/>
</dbReference>
<dbReference type="GO" id="GO:0090336">
    <property type="term" value="P:positive regulation of brown fat cell differentiation"/>
    <property type="evidence" value="ECO:0000250"/>
    <property type="project" value="UniProtKB"/>
</dbReference>
<dbReference type="GO" id="GO:0045588">
    <property type="term" value="P:positive regulation of gamma-delta T cell differentiation"/>
    <property type="evidence" value="ECO:0007669"/>
    <property type="project" value="Ensembl"/>
</dbReference>
<dbReference type="GO" id="GO:0006355">
    <property type="term" value="P:regulation of DNA-templated transcription"/>
    <property type="evidence" value="ECO:0000250"/>
    <property type="project" value="UniProtKB"/>
</dbReference>
<dbReference type="GO" id="GO:0006357">
    <property type="term" value="P:regulation of transcription by RNA polymerase II"/>
    <property type="evidence" value="ECO:0000318"/>
    <property type="project" value="GO_Central"/>
</dbReference>
<dbReference type="GO" id="GO:0021529">
    <property type="term" value="P:spinal cord oligodendrocyte cell differentiation"/>
    <property type="evidence" value="ECO:0000250"/>
    <property type="project" value="UniProtKB"/>
</dbReference>
<dbReference type="CDD" id="cd22030">
    <property type="entry name" value="HMG-box_SoxD"/>
    <property type="match status" value="1"/>
</dbReference>
<dbReference type="FunFam" id="1.10.30.10:FF:000003">
    <property type="entry name" value="Putative transcription factor SOX-6"/>
    <property type="match status" value="1"/>
</dbReference>
<dbReference type="Gene3D" id="1.10.30.10">
    <property type="entry name" value="High mobility group box domain"/>
    <property type="match status" value="1"/>
</dbReference>
<dbReference type="InterPro" id="IPR009071">
    <property type="entry name" value="HMG_box_dom"/>
</dbReference>
<dbReference type="InterPro" id="IPR036910">
    <property type="entry name" value="HMG_box_dom_sf"/>
</dbReference>
<dbReference type="InterPro" id="IPR051356">
    <property type="entry name" value="SOX/SOX-like_TF"/>
</dbReference>
<dbReference type="PANTHER" id="PTHR45789">
    <property type="entry name" value="FI18025P1"/>
    <property type="match status" value="1"/>
</dbReference>
<dbReference type="PANTHER" id="PTHR45789:SF4">
    <property type="entry name" value="TRANSCRIPTION FACTOR SOX-13"/>
    <property type="match status" value="1"/>
</dbReference>
<dbReference type="Pfam" id="PF00505">
    <property type="entry name" value="HMG_box"/>
    <property type="match status" value="1"/>
</dbReference>
<dbReference type="SMART" id="SM00398">
    <property type="entry name" value="HMG"/>
    <property type="match status" value="1"/>
</dbReference>
<dbReference type="SUPFAM" id="SSF47095">
    <property type="entry name" value="HMG-box"/>
    <property type="match status" value="1"/>
</dbReference>
<dbReference type="PROSITE" id="PS50118">
    <property type="entry name" value="HMG_BOX_2"/>
    <property type="match status" value="1"/>
</dbReference>
<evidence type="ECO:0000250" key="1">
    <source>
        <dbReference type="UniProtKB" id="Q04891"/>
    </source>
</evidence>
<evidence type="ECO:0000255" key="2">
    <source>
        <dbReference type="PROSITE-ProRule" id="PRU00267"/>
    </source>
</evidence>
<evidence type="ECO:0000256" key="3">
    <source>
        <dbReference type="SAM" id="MobiDB-lite"/>
    </source>
</evidence>
<evidence type="ECO:0000269" key="4">
    <source>
    </source>
</evidence>
<evidence type="ECO:0000269" key="5">
    <source>
    </source>
</evidence>
<evidence type="ECO:0000269" key="6">
    <source>
    </source>
</evidence>
<evidence type="ECO:0000305" key="7"/>
<evidence type="ECO:0007744" key="8">
    <source>
    </source>
</evidence>
<evidence type="ECO:0007744" key="9">
    <source>
    </source>
</evidence>
<evidence type="ECO:0007744" key="10">
    <source>
    </source>
</evidence>
<evidence type="ECO:0007744" key="11">
    <source>
    </source>
</evidence>
<gene>
    <name type="primary">SOX13</name>
</gene>
<comment type="function">
    <text evidence="1 4 6">Transcription factor that binds to DNA at the consensus sequence 5'-AACAAT-3' (PubMed:10871192). Binds to the proximal promoter region of the myelin protein MPZ gene, and may thereby be involved in the differentiation of oligodendroglia in the developing spinal tube (By similarity). Binds to the gene promoter of MBP and acts as a transcriptional repressor (By similarity). Binds to and modifies the activity of TCF7/TCF1, thereby inhibiting transcription and modulates normal gamma-delta T-cell development and differentiation of IL17A expressing gamma-delta T-cells (By similarity). Regulates expression of BLK in the differentiation of IL17A expressing gamma-delta T-cells (By similarity). Promotes brown adipocyte differentiation (By similarity). Inhibitor of WNT signaling (PubMed:20028982).</text>
</comment>
<comment type="subunit">
    <text evidence="4 5 6">Homodimer; homodimerization reduces DNA binding efficiency (PubMed:10871192). Interacts with TCF7/TCF1 long isoform (via N-terminus); inhibits WNT-mediated transcriptional activity (PubMed:17218525, PubMed:20028982). Interacts with HHEX (via N-terminus); abolishes the SOX13-mediated inhibition of WNT-mediated transcriptional activity via competitive inhibition of the SOX13-TCF7 complex (PubMed:20028982).</text>
</comment>
<comment type="interaction">
    <interactant intactId="EBI-3928516">
        <id>Q9UN79</id>
    </interactant>
    <interactant intactId="EBI-741533">
        <id>P56545</id>
        <label>CTBP2</label>
    </interactant>
    <organismsDiffer>false</organismsDiffer>
    <experiments>3</experiments>
</comment>
<comment type="interaction">
    <interactant intactId="EBI-3928516">
        <id>Q9UN79</id>
    </interactant>
    <interactant intactId="EBI-10171902">
        <id>P56545-3</id>
        <label>CTBP2</label>
    </interactant>
    <organismsDiffer>false</organismsDiffer>
    <experiments>3</experiments>
</comment>
<comment type="interaction">
    <interactant intactId="EBI-3928516">
        <id>Q9UN79</id>
    </interactant>
    <interactant intactId="EBI-715611">
        <id>Q9C086</id>
        <label>INO80B</label>
    </interactant>
    <organismsDiffer>false</organismsDiffer>
    <experiments>3</experiments>
</comment>
<comment type="interaction">
    <interactant intactId="EBI-3928516">
        <id>Q9UN79</id>
    </interactant>
    <interactant intactId="EBI-355744">
        <id>Q12933</id>
        <label>TRAF2</label>
    </interactant>
    <organismsDiffer>false</organismsDiffer>
    <experiments>3</experiments>
</comment>
<comment type="interaction">
    <interactant intactId="EBI-3928516">
        <id>Q9UN79</id>
    </interactant>
    <interactant intactId="EBI-6116822">
        <id>Q8N3L3</id>
        <label>TXLNB</label>
    </interactant>
    <organismsDiffer>false</organismsDiffer>
    <experiments>3</experiments>
</comment>
<comment type="interaction">
    <interactant intactId="EBI-3928516">
        <id>Q9UN79</id>
    </interactant>
    <interactant intactId="EBI-11980193">
        <id>Q14119</id>
        <label>VEZF1</label>
    </interactant>
    <organismsDiffer>false</organismsDiffer>
    <experiments>3</experiments>
</comment>
<comment type="interaction">
    <interactant intactId="EBI-3928516">
        <id>Q9UN79</id>
    </interactant>
    <interactant intactId="EBI-6427977">
        <id>Q96SQ5</id>
        <label>ZNF587</label>
    </interactant>
    <organismsDiffer>false</organismsDiffer>
    <experiments>3</experiments>
</comment>
<comment type="subcellular location">
    <subcellularLocation>
        <location evidence="2">Nucleus</location>
    </subcellularLocation>
    <subcellularLocation>
        <location evidence="4">Cytoplasm</location>
    </subcellularLocation>
</comment>
<comment type="tissue specificity">
    <text evidence="4 6">Expressed in exocrine cells and islets of Langerhans in the pancreas (at protein level) (PubMed:10871192). Expressed in the pancreas, placenta, kidney, brain, heart, lung, and liver (PubMed:10871192, PubMed:20028982). Expressed in adipose tissue, cervix, colon, esophagus, ovary, prostate, small intestine, spleen, testicle, thymus and thyroid (PubMed:20028982).</text>
</comment>
<comment type="disease">
    <text evidence="4">Autoantibodies against SOX13 are present in sera from patients with type 1 diabetes.</text>
</comment>
<comment type="sequence caution" evidence="7">
    <conflict type="miscellaneous discrepancy">
        <sequence resource="EMBL-CDS" id="AAC83687"/>
    </conflict>
    <text>Several frameshifts.</text>
</comment>
<comment type="sequence caution" evidence="7">
    <conflict type="erroneous initiation">
        <sequence resource="EMBL-CDS" id="AAF23875"/>
    </conflict>
</comment>
<comment type="sequence caution" evidence="7">
    <conflict type="erroneous initiation">
        <sequence resource="EMBL-CDS" id="BAG65072"/>
    </conflict>
</comment>